<dbReference type="EC" id="3.5.4.16" evidence="1"/>
<dbReference type="EMBL" id="CP001403">
    <property type="protein sequence ID" value="ACP46111.1"/>
    <property type="molecule type" value="Genomic_DNA"/>
</dbReference>
<dbReference type="RefSeq" id="WP_012711716.1">
    <property type="nucleotide sequence ID" value="NC_012622.1"/>
</dbReference>
<dbReference type="SMR" id="C3N7B7"/>
<dbReference type="GeneID" id="84062091"/>
<dbReference type="KEGG" id="siy:YG5714_1855"/>
<dbReference type="HOGENOM" id="CLU_049768_3_2_2"/>
<dbReference type="UniPathway" id="UPA00848">
    <property type="reaction ID" value="UER00151"/>
</dbReference>
<dbReference type="Proteomes" id="UP000002308">
    <property type="component" value="Chromosome"/>
</dbReference>
<dbReference type="GO" id="GO:0005737">
    <property type="term" value="C:cytoplasm"/>
    <property type="evidence" value="ECO:0007669"/>
    <property type="project" value="TreeGrafter"/>
</dbReference>
<dbReference type="GO" id="GO:0005525">
    <property type="term" value="F:GTP binding"/>
    <property type="evidence" value="ECO:0007669"/>
    <property type="project" value="UniProtKB-KW"/>
</dbReference>
<dbReference type="GO" id="GO:0003934">
    <property type="term" value="F:GTP cyclohydrolase I activity"/>
    <property type="evidence" value="ECO:0007669"/>
    <property type="project" value="UniProtKB-UniRule"/>
</dbReference>
<dbReference type="GO" id="GO:0008270">
    <property type="term" value="F:zinc ion binding"/>
    <property type="evidence" value="ECO:0007669"/>
    <property type="project" value="UniProtKB-UniRule"/>
</dbReference>
<dbReference type="GO" id="GO:0006730">
    <property type="term" value="P:one-carbon metabolic process"/>
    <property type="evidence" value="ECO:0007669"/>
    <property type="project" value="UniProtKB-UniRule"/>
</dbReference>
<dbReference type="GO" id="GO:0006729">
    <property type="term" value="P:tetrahydrobiopterin biosynthetic process"/>
    <property type="evidence" value="ECO:0007669"/>
    <property type="project" value="TreeGrafter"/>
</dbReference>
<dbReference type="GO" id="GO:0046654">
    <property type="term" value="P:tetrahydrofolate biosynthetic process"/>
    <property type="evidence" value="ECO:0007669"/>
    <property type="project" value="UniProtKB-UniRule"/>
</dbReference>
<dbReference type="FunFam" id="1.10.286.10:FF:000007">
    <property type="entry name" value="GTP cyclohydrolase 1"/>
    <property type="match status" value="1"/>
</dbReference>
<dbReference type="FunFam" id="3.30.1130.10:FF:000001">
    <property type="entry name" value="GTP cyclohydrolase 1"/>
    <property type="match status" value="1"/>
</dbReference>
<dbReference type="Gene3D" id="1.10.286.10">
    <property type="match status" value="1"/>
</dbReference>
<dbReference type="Gene3D" id="3.30.1130.10">
    <property type="match status" value="1"/>
</dbReference>
<dbReference type="HAMAP" id="MF_00223">
    <property type="entry name" value="FolE"/>
    <property type="match status" value="1"/>
</dbReference>
<dbReference type="InterPro" id="IPR043133">
    <property type="entry name" value="GTP-CH-I_C/QueF"/>
</dbReference>
<dbReference type="InterPro" id="IPR043134">
    <property type="entry name" value="GTP-CH-I_N"/>
</dbReference>
<dbReference type="InterPro" id="IPR001474">
    <property type="entry name" value="GTP_CycHdrlase_I"/>
</dbReference>
<dbReference type="InterPro" id="IPR018234">
    <property type="entry name" value="GTP_CycHdrlase_I_CS"/>
</dbReference>
<dbReference type="InterPro" id="IPR020602">
    <property type="entry name" value="GTP_CycHdrlase_I_dom"/>
</dbReference>
<dbReference type="NCBIfam" id="NF006825">
    <property type="entry name" value="PRK09347.1-2"/>
    <property type="match status" value="1"/>
</dbReference>
<dbReference type="NCBIfam" id="NF006826">
    <property type="entry name" value="PRK09347.1-3"/>
    <property type="match status" value="1"/>
</dbReference>
<dbReference type="PANTHER" id="PTHR11109:SF7">
    <property type="entry name" value="GTP CYCLOHYDROLASE 1"/>
    <property type="match status" value="1"/>
</dbReference>
<dbReference type="PANTHER" id="PTHR11109">
    <property type="entry name" value="GTP CYCLOHYDROLASE I"/>
    <property type="match status" value="1"/>
</dbReference>
<dbReference type="Pfam" id="PF01227">
    <property type="entry name" value="GTP_cyclohydroI"/>
    <property type="match status" value="1"/>
</dbReference>
<dbReference type="SUPFAM" id="SSF55620">
    <property type="entry name" value="Tetrahydrobiopterin biosynthesis enzymes-like"/>
    <property type="match status" value="1"/>
</dbReference>
<dbReference type="PROSITE" id="PS00859">
    <property type="entry name" value="GTP_CYCLOHYDROL_1_1"/>
    <property type="match status" value="1"/>
</dbReference>
<dbReference type="PROSITE" id="PS00860">
    <property type="entry name" value="GTP_CYCLOHYDROL_1_2"/>
    <property type="match status" value="1"/>
</dbReference>
<protein>
    <recommendedName>
        <fullName evidence="1">GTP cyclohydrolase 1</fullName>
        <ecNumber evidence="1">3.5.4.16</ecNumber>
    </recommendedName>
    <alternativeName>
        <fullName evidence="1">GTP cyclohydrolase I</fullName>
        <shortName evidence="1">GTP-CH-I</shortName>
    </alternativeName>
</protein>
<feature type="chain" id="PRO_1000204299" description="GTP cyclohydrolase 1">
    <location>
        <begin position="1"/>
        <end position="208"/>
    </location>
</feature>
<feature type="binding site" evidence="1">
    <location>
        <position position="89"/>
    </location>
    <ligand>
        <name>Zn(2+)</name>
        <dbReference type="ChEBI" id="CHEBI:29105"/>
    </ligand>
</feature>
<feature type="binding site" evidence="1">
    <location>
        <position position="92"/>
    </location>
    <ligand>
        <name>Zn(2+)</name>
        <dbReference type="ChEBI" id="CHEBI:29105"/>
    </ligand>
</feature>
<feature type="binding site" evidence="1">
    <location>
        <position position="163"/>
    </location>
    <ligand>
        <name>Zn(2+)</name>
        <dbReference type="ChEBI" id="CHEBI:29105"/>
    </ligand>
</feature>
<comment type="catalytic activity">
    <reaction evidence="1">
        <text>GTP + H2O = 7,8-dihydroneopterin 3'-triphosphate + formate + H(+)</text>
        <dbReference type="Rhea" id="RHEA:17473"/>
        <dbReference type="ChEBI" id="CHEBI:15377"/>
        <dbReference type="ChEBI" id="CHEBI:15378"/>
        <dbReference type="ChEBI" id="CHEBI:15740"/>
        <dbReference type="ChEBI" id="CHEBI:37565"/>
        <dbReference type="ChEBI" id="CHEBI:58462"/>
        <dbReference type="EC" id="3.5.4.16"/>
    </reaction>
</comment>
<comment type="pathway">
    <text evidence="1">Cofactor biosynthesis; 7,8-dihydroneopterin triphosphate biosynthesis; 7,8-dihydroneopterin triphosphate from GTP: step 1/1.</text>
</comment>
<comment type="subunit">
    <text evidence="1">Homomer.</text>
</comment>
<comment type="similarity">
    <text evidence="1">Belongs to the GTP cyclohydrolase I family.</text>
</comment>
<evidence type="ECO:0000255" key="1">
    <source>
        <dbReference type="HAMAP-Rule" id="MF_00223"/>
    </source>
</evidence>
<accession>C3N7B7</accession>
<name>GCH1_SACI7</name>
<keyword id="KW-0342">GTP-binding</keyword>
<keyword id="KW-0378">Hydrolase</keyword>
<keyword id="KW-0479">Metal-binding</keyword>
<keyword id="KW-0547">Nucleotide-binding</keyword>
<keyword id="KW-0554">One-carbon metabolism</keyword>
<keyword id="KW-0862">Zinc</keyword>
<sequence length="208" mass="23566">MQKTELDDQKLVEEIARRIREILELLGENPEREGLKETPERVAKALLEMTSGLRTPPPQIKVFSLGEDGEVYEKNQIVLIKDVNFSSLCEHHMLPIIGKIHVAYIVSNSGKVAGFSKIIRIVNYYSSRLQIQERLVEQIADAIMNSEIKPKGVMVIGNAIHMCSYVRGVKDKEAKLVSVAYRGLFKTNRALQNHVFRLLDNANKVNLL</sequence>
<organism>
    <name type="scientific">Saccharolobus islandicus (strain Y.G.57.14 / Yellowstone #1)</name>
    <name type="common">Sulfolobus islandicus</name>
    <dbReference type="NCBI Taxonomy" id="439386"/>
    <lineage>
        <taxon>Archaea</taxon>
        <taxon>Thermoproteota</taxon>
        <taxon>Thermoprotei</taxon>
        <taxon>Sulfolobales</taxon>
        <taxon>Sulfolobaceae</taxon>
        <taxon>Saccharolobus</taxon>
    </lineage>
</organism>
<proteinExistence type="inferred from homology"/>
<gene>
    <name evidence="1" type="primary">folE</name>
    <name type="ordered locus">YG5714_1855</name>
</gene>
<reference key="1">
    <citation type="journal article" date="2009" name="Proc. Natl. Acad. Sci. U.S.A.">
        <title>Biogeography of the Sulfolobus islandicus pan-genome.</title>
        <authorList>
            <person name="Reno M.L."/>
            <person name="Held N.L."/>
            <person name="Fields C.J."/>
            <person name="Burke P.V."/>
            <person name="Whitaker R.J."/>
        </authorList>
    </citation>
    <scope>NUCLEOTIDE SEQUENCE [LARGE SCALE GENOMIC DNA]</scope>
    <source>
        <strain>Y.G.57.14 / Yellowstone #1</strain>
    </source>
</reference>